<organism>
    <name type="scientific">Escherichia coli (strain K12)</name>
    <dbReference type="NCBI Taxonomy" id="83333"/>
    <lineage>
        <taxon>Bacteria</taxon>
        <taxon>Pseudomonadati</taxon>
        <taxon>Pseudomonadota</taxon>
        <taxon>Gammaproteobacteria</taxon>
        <taxon>Enterobacterales</taxon>
        <taxon>Enterobacteriaceae</taxon>
        <taxon>Escherichia</taxon>
    </lineage>
</organism>
<comment type="miscellaneous">
    <text evidence="1">Missing up to 50 C-terminal residues compared to orthologs.</text>
</comment>
<comment type="similarity">
    <text evidence="1">Belongs to the transposase 11 family.</text>
</comment>
<protein>
    <recommendedName>
        <fullName>Putative transposase YncI</fullName>
    </recommendedName>
</protein>
<accession>P76119</accession>
<accession>P76120</accession>
<accession>Q79EJ9</accession>
<accession>Q79EK0</accession>
<evidence type="ECO:0000305" key="1"/>
<name>YNCI_ECOLI</name>
<proteinExistence type="inferred from homology"/>
<gene>
    <name type="primary">yncI</name>
    <name type="synonym">yncM</name>
    <name type="ordered locus">b1459</name>
    <name type="ordered locus">JW1453/JW5237</name>
    <name type="ORF">b1458</name>
</gene>
<reference key="1">
    <citation type="journal article" date="1997" name="Science">
        <title>The complete genome sequence of Escherichia coli K-12.</title>
        <authorList>
            <person name="Blattner F.R."/>
            <person name="Plunkett G. III"/>
            <person name="Bloch C.A."/>
            <person name="Perna N.T."/>
            <person name="Burland V."/>
            <person name="Riley M."/>
            <person name="Collado-Vides J."/>
            <person name="Glasner J.D."/>
            <person name="Rode C.K."/>
            <person name="Mayhew G.F."/>
            <person name="Gregor J."/>
            <person name="Davis N.W."/>
            <person name="Kirkpatrick H.A."/>
            <person name="Goeden M.A."/>
            <person name="Rose D.J."/>
            <person name="Mau B."/>
            <person name="Shao Y."/>
        </authorList>
    </citation>
    <scope>NUCLEOTIDE SEQUENCE [LARGE SCALE GENOMIC DNA]</scope>
    <source>
        <strain>K12 / MG1655 / ATCC 47076</strain>
    </source>
</reference>
<reference key="2">
    <citation type="journal article" date="2006" name="Mol. Syst. Biol.">
        <title>Highly accurate genome sequences of Escherichia coli K-12 strains MG1655 and W3110.</title>
        <authorList>
            <person name="Hayashi K."/>
            <person name="Morooka N."/>
            <person name="Yamamoto Y."/>
            <person name="Fujita K."/>
            <person name="Isono K."/>
            <person name="Choi S."/>
            <person name="Ohtsubo E."/>
            <person name="Baba T."/>
            <person name="Wanner B.L."/>
            <person name="Mori H."/>
            <person name="Horiuchi T."/>
        </authorList>
    </citation>
    <scope>NUCLEOTIDE SEQUENCE [LARGE SCALE GENOMIC DNA]</scope>
    <source>
        <strain>K12 / W3110 / ATCC 27325 / DSM 5911</strain>
    </source>
</reference>
<feature type="chain" id="PRO_0000246145" description="Putative transposase YncI">
    <location>
        <begin position="1"/>
        <end position="248"/>
    </location>
</feature>
<dbReference type="EMBL" id="U00096">
    <property type="status" value="NOT_ANNOTATED_CDS"/>
    <property type="molecule type" value="Genomic_DNA"/>
</dbReference>
<dbReference type="EMBL" id="AP009048">
    <property type="protein sequence ID" value="BAA15089.2"/>
    <property type="molecule type" value="Genomic_DNA"/>
</dbReference>
<dbReference type="PIR" id="E64898">
    <property type="entry name" value="E64898"/>
</dbReference>
<dbReference type="PIR" id="F64898">
    <property type="entry name" value="F64898"/>
</dbReference>
<dbReference type="BioGRID" id="4262888">
    <property type="interactions" value="52"/>
</dbReference>
<dbReference type="BioGRID" id="4262889">
    <property type="interactions" value="186"/>
</dbReference>
<dbReference type="DIP" id="DIP-28080N"/>
<dbReference type="FunCoup" id="P76119">
    <property type="interactions" value="127"/>
</dbReference>
<dbReference type="IntAct" id="P76119">
    <property type="interactions" value="1"/>
</dbReference>
<dbReference type="KEGG" id="ecj:JW1453"/>
<dbReference type="KEGG" id="ecoc:C3026_08475"/>
<dbReference type="eggNOG" id="COG5433">
    <property type="taxonomic scope" value="Bacteria"/>
</dbReference>
<dbReference type="HOGENOM" id="CLU_046404_0_0_6"/>
<dbReference type="InParanoid" id="P76119"/>
<dbReference type="PhylomeDB" id="P76119"/>
<dbReference type="Proteomes" id="UP000000625">
    <property type="component" value="Chromosome"/>
</dbReference>
<dbReference type="GO" id="GO:0003677">
    <property type="term" value="F:DNA binding"/>
    <property type="evidence" value="ECO:0007669"/>
    <property type="project" value="UniProtKB-KW"/>
</dbReference>
<dbReference type="GO" id="GO:0004803">
    <property type="term" value="F:transposase activity"/>
    <property type="evidence" value="ECO:0007669"/>
    <property type="project" value="InterPro"/>
</dbReference>
<dbReference type="GO" id="GO:0006313">
    <property type="term" value="P:DNA transposition"/>
    <property type="evidence" value="ECO:0007669"/>
    <property type="project" value="InterPro"/>
</dbReference>
<dbReference type="InterPro" id="IPR047647">
    <property type="entry name" value="ISAs1_transpos"/>
</dbReference>
<dbReference type="InterPro" id="IPR002559">
    <property type="entry name" value="Transposase_11"/>
</dbReference>
<dbReference type="InterPro" id="IPR051698">
    <property type="entry name" value="Transposase_11-like"/>
</dbReference>
<dbReference type="InterPro" id="IPR032806">
    <property type="entry name" value="YbfD_N"/>
</dbReference>
<dbReference type="NCBIfam" id="NF033564">
    <property type="entry name" value="transpos_ISAs1"/>
    <property type="match status" value="1"/>
</dbReference>
<dbReference type="PANTHER" id="PTHR30298">
    <property type="entry name" value="H REPEAT-ASSOCIATED PREDICTED TRANSPOSASE"/>
    <property type="match status" value="1"/>
</dbReference>
<dbReference type="PANTHER" id="PTHR30298:SF0">
    <property type="entry name" value="PROTEIN YBFL-RELATED"/>
    <property type="match status" value="1"/>
</dbReference>
<dbReference type="Pfam" id="PF01609">
    <property type="entry name" value="DDE_Tnp_1"/>
    <property type="match status" value="1"/>
</dbReference>
<dbReference type="Pfam" id="PF13808">
    <property type="entry name" value="DDE_Tnp_1_assoc"/>
    <property type="match status" value="1"/>
</dbReference>
<sequence>MSIQSLLDYISVTPDIRQQGKVKHKLSAILFLTVCAVIAGADEWQEIEDFGHERLEWLKKYGDFDNGIPVDDTIARVVSNIDSLAFEKMFIEWMQECHEITDGEIIAIDGKTIRGSFDKGKRKGAIHMVSAFSNENGVVLGQVKTEAKSNEITAIPELLNLLYLKKNLITIDAMGCQKDIASKIKDKKADYLLAVKGNQGKLHHAFEEKFPVNVFSNYKGDSFSTQEISHGRKETRLHIVSNVTPELL</sequence>
<keyword id="KW-0233">DNA recombination</keyword>
<keyword id="KW-0238">DNA-binding</keyword>
<keyword id="KW-1185">Reference proteome</keyword>
<keyword id="KW-0814">Transposable element</keyword>
<keyword id="KW-0815">Transposition</keyword>